<name>MUTL_BACC3</name>
<sequence>MGKIRKLDDQLSNLIAAGEVVERPASVVKELVENSIDANSTSIEIHLEEAGLSKIRIIDNGDGIAEEDCIVAFERHATSKIKDENDLFRIRTLGFRGEALPSIASVSELELITSTGDAPGTHLIIKGGDIIKQEKTASRKGTDITVQNLFFNTPARLKYMKTIHTELGNITDIVYRIAMSHPEVSLKLFHNEKKLLHTSGNGDVRQVLASIYSIQVAKKLVPIEAESLDFTIKGYVTLPEVTRASRNYMSTIVNGRYVRNFVLMKAIQQGYHTLLPVGRYPIGFLSIEMDPMLVDVNVHPAKLEVRFSKEQELLKLIEETLQAAFKKIQLIPDAGVTTKKKEKDESVQEQFQFEHAKPKEPSMPDIILPTGMDEKQEEPLAVKQPAQLWQPPKQEWQPPQSLVREEQSWQPSTKPIMEEPIREEKSWDSNEEDFELEELEEEVQEIEEIEMNGNDLPPLYPIGQMHGTYIFAQNDKGLYMIDQHAAQERINYEYFRDKVGRVAQEVQELLVPYRIDLSLTEFLRVEEQLEELKKVGLFLEQFGHQSFIVRSHPTWFPKGQETEIIDEMMEQVVKLKKVDIKKLREEAAIMMSCKASIKANQYLTNDQIFALLEELRTTTNPYTCPHGRPILVHHSTYELEKMFKRVM</sequence>
<dbReference type="EMBL" id="CP001407">
    <property type="protein sequence ID" value="ACO27596.1"/>
    <property type="molecule type" value="Genomic_DNA"/>
</dbReference>
<dbReference type="RefSeq" id="WP_000516457.1">
    <property type="nucleotide sequence ID" value="NZ_CP009318.1"/>
</dbReference>
<dbReference type="SMR" id="C1ENZ2"/>
<dbReference type="KEGG" id="bcx:BCA_3865"/>
<dbReference type="PATRIC" id="fig|572264.18.peg.3823"/>
<dbReference type="Proteomes" id="UP000002210">
    <property type="component" value="Chromosome"/>
</dbReference>
<dbReference type="GO" id="GO:0032300">
    <property type="term" value="C:mismatch repair complex"/>
    <property type="evidence" value="ECO:0007669"/>
    <property type="project" value="InterPro"/>
</dbReference>
<dbReference type="GO" id="GO:0005524">
    <property type="term" value="F:ATP binding"/>
    <property type="evidence" value="ECO:0007669"/>
    <property type="project" value="InterPro"/>
</dbReference>
<dbReference type="GO" id="GO:0016887">
    <property type="term" value="F:ATP hydrolysis activity"/>
    <property type="evidence" value="ECO:0007669"/>
    <property type="project" value="InterPro"/>
</dbReference>
<dbReference type="GO" id="GO:0140664">
    <property type="term" value="F:ATP-dependent DNA damage sensor activity"/>
    <property type="evidence" value="ECO:0007669"/>
    <property type="project" value="InterPro"/>
</dbReference>
<dbReference type="GO" id="GO:0030983">
    <property type="term" value="F:mismatched DNA binding"/>
    <property type="evidence" value="ECO:0007669"/>
    <property type="project" value="InterPro"/>
</dbReference>
<dbReference type="GO" id="GO:0006298">
    <property type="term" value="P:mismatch repair"/>
    <property type="evidence" value="ECO:0007669"/>
    <property type="project" value="UniProtKB-UniRule"/>
</dbReference>
<dbReference type="CDD" id="cd16926">
    <property type="entry name" value="HATPase_MutL-MLH-PMS-like"/>
    <property type="match status" value="1"/>
</dbReference>
<dbReference type="CDD" id="cd00782">
    <property type="entry name" value="MutL_Trans"/>
    <property type="match status" value="1"/>
</dbReference>
<dbReference type="FunFam" id="3.30.1370.100:FF:000004">
    <property type="entry name" value="DNA mismatch repair endonuclease MutL"/>
    <property type="match status" value="1"/>
</dbReference>
<dbReference type="FunFam" id="3.30.230.10:FF:000036">
    <property type="entry name" value="DNA mismatch repair endonuclease MutL"/>
    <property type="match status" value="1"/>
</dbReference>
<dbReference type="FunFam" id="3.30.565.10:FF:000003">
    <property type="entry name" value="DNA mismatch repair endonuclease MutL"/>
    <property type="match status" value="1"/>
</dbReference>
<dbReference type="Gene3D" id="3.30.230.10">
    <property type="match status" value="1"/>
</dbReference>
<dbReference type="Gene3D" id="3.30.565.10">
    <property type="entry name" value="Histidine kinase-like ATPase, C-terminal domain"/>
    <property type="match status" value="1"/>
</dbReference>
<dbReference type="Gene3D" id="3.30.1540.20">
    <property type="entry name" value="MutL, C-terminal domain, dimerisation subdomain"/>
    <property type="match status" value="1"/>
</dbReference>
<dbReference type="Gene3D" id="3.30.1370.100">
    <property type="entry name" value="MutL, C-terminal domain, regulatory subdomain"/>
    <property type="match status" value="1"/>
</dbReference>
<dbReference type="HAMAP" id="MF_00149">
    <property type="entry name" value="DNA_mis_repair"/>
    <property type="match status" value="1"/>
</dbReference>
<dbReference type="InterPro" id="IPR014762">
    <property type="entry name" value="DNA_mismatch_repair_CS"/>
</dbReference>
<dbReference type="InterPro" id="IPR020667">
    <property type="entry name" value="DNA_mismatch_repair_MutL"/>
</dbReference>
<dbReference type="InterPro" id="IPR013507">
    <property type="entry name" value="DNA_mismatch_S5_2-like"/>
</dbReference>
<dbReference type="InterPro" id="IPR036890">
    <property type="entry name" value="HATPase_C_sf"/>
</dbReference>
<dbReference type="InterPro" id="IPR002099">
    <property type="entry name" value="MutL/Mlh/PMS"/>
</dbReference>
<dbReference type="InterPro" id="IPR038973">
    <property type="entry name" value="MutL/Mlh/Pms-like"/>
</dbReference>
<dbReference type="InterPro" id="IPR014790">
    <property type="entry name" value="MutL_C"/>
</dbReference>
<dbReference type="InterPro" id="IPR042120">
    <property type="entry name" value="MutL_C_dimsub"/>
</dbReference>
<dbReference type="InterPro" id="IPR042121">
    <property type="entry name" value="MutL_C_regsub"/>
</dbReference>
<dbReference type="InterPro" id="IPR037198">
    <property type="entry name" value="MutL_C_sf"/>
</dbReference>
<dbReference type="InterPro" id="IPR020568">
    <property type="entry name" value="Ribosomal_Su5_D2-typ_SF"/>
</dbReference>
<dbReference type="InterPro" id="IPR014721">
    <property type="entry name" value="Ribsml_uS5_D2-typ_fold_subgr"/>
</dbReference>
<dbReference type="NCBIfam" id="TIGR00585">
    <property type="entry name" value="mutl"/>
    <property type="match status" value="1"/>
</dbReference>
<dbReference type="NCBIfam" id="NF000950">
    <property type="entry name" value="PRK00095.1-3"/>
    <property type="match status" value="1"/>
</dbReference>
<dbReference type="PANTHER" id="PTHR10073">
    <property type="entry name" value="DNA MISMATCH REPAIR PROTEIN MLH, PMS, MUTL"/>
    <property type="match status" value="1"/>
</dbReference>
<dbReference type="PANTHER" id="PTHR10073:SF12">
    <property type="entry name" value="DNA MISMATCH REPAIR PROTEIN MLH1"/>
    <property type="match status" value="1"/>
</dbReference>
<dbReference type="Pfam" id="PF01119">
    <property type="entry name" value="DNA_mis_repair"/>
    <property type="match status" value="1"/>
</dbReference>
<dbReference type="Pfam" id="PF13589">
    <property type="entry name" value="HATPase_c_3"/>
    <property type="match status" value="1"/>
</dbReference>
<dbReference type="Pfam" id="PF08676">
    <property type="entry name" value="MutL_C"/>
    <property type="match status" value="1"/>
</dbReference>
<dbReference type="SMART" id="SM01340">
    <property type="entry name" value="DNA_mis_repair"/>
    <property type="match status" value="1"/>
</dbReference>
<dbReference type="SMART" id="SM00853">
    <property type="entry name" value="MutL_C"/>
    <property type="match status" value="1"/>
</dbReference>
<dbReference type="SUPFAM" id="SSF55874">
    <property type="entry name" value="ATPase domain of HSP90 chaperone/DNA topoisomerase II/histidine kinase"/>
    <property type="match status" value="1"/>
</dbReference>
<dbReference type="SUPFAM" id="SSF118116">
    <property type="entry name" value="DNA mismatch repair protein MutL"/>
    <property type="match status" value="1"/>
</dbReference>
<dbReference type="SUPFAM" id="SSF54211">
    <property type="entry name" value="Ribosomal protein S5 domain 2-like"/>
    <property type="match status" value="1"/>
</dbReference>
<dbReference type="PROSITE" id="PS00058">
    <property type="entry name" value="DNA_MISMATCH_REPAIR_1"/>
    <property type="match status" value="1"/>
</dbReference>
<reference key="1">
    <citation type="submission" date="2009-02" db="EMBL/GenBank/DDBJ databases">
        <title>Genome sequence of Bacillus cereus 03BB102.</title>
        <authorList>
            <person name="Dodson R.J."/>
            <person name="Jackson P."/>
            <person name="Munk A.C."/>
            <person name="Brettin T."/>
            <person name="Bruce D."/>
            <person name="Detter C."/>
            <person name="Tapia R."/>
            <person name="Han C."/>
            <person name="Sutton G."/>
            <person name="Sims D."/>
        </authorList>
    </citation>
    <scope>NUCLEOTIDE SEQUENCE [LARGE SCALE GENOMIC DNA]</scope>
    <source>
        <strain>03BB102</strain>
    </source>
</reference>
<comment type="function">
    <text evidence="1">This protein is involved in the repair of mismatches in DNA. It is required for dam-dependent methyl-directed DNA mismatch repair. May act as a 'molecular matchmaker', a protein that promotes the formation of a stable complex between two or more DNA-binding proteins in an ATP-dependent manner without itself being part of a final effector complex.</text>
</comment>
<comment type="similarity">
    <text evidence="1">Belongs to the DNA mismatch repair MutL/HexB family.</text>
</comment>
<protein>
    <recommendedName>
        <fullName evidence="1">DNA mismatch repair protein MutL</fullName>
    </recommendedName>
</protein>
<accession>C1ENZ2</accession>
<gene>
    <name evidence="1" type="primary">mutL</name>
    <name type="ordered locus">BCA_3865</name>
</gene>
<keyword id="KW-0227">DNA damage</keyword>
<keyword id="KW-0234">DNA repair</keyword>
<organism>
    <name type="scientific">Bacillus cereus (strain 03BB102)</name>
    <dbReference type="NCBI Taxonomy" id="572264"/>
    <lineage>
        <taxon>Bacteria</taxon>
        <taxon>Bacillati</taxon>
        <taxon>Bacillota</taxon>
        <taxon>Bacilli</taxon>
        <taxon>Bacillales</taxon>
        <taxon>Bacillaceae</taxon>
        <taxon>Bacillus</taxon>
        <taxon>Bacillus cereus group</taxon>
    </lineage>
</organism>
<evidence type="ECO:0000255" key="1">
    <source>
        <dbReference type="HAMAP-Rule" id="MF_00149"/>
    </source>
</evidence>
<proteinExistence type="inferred from homology"/>
<feature type="chain" id="PRO_1000192156" description="DNA mismatch repair protein MutL">
    <location>
        <begin position="1"/>
        <end position="647"/>
    </location>
</feature>